<sequence>NGGTSGLFAFPRV</sequence>
<evidence type="ECO:0000269" key="1">
    <source>
    </source>
</evidence>
<evidence type="ECO:0000303" key="2">
    <source>
    </source>
</evidence>
<evidence type="ECO:0000305" key="3"/>
<accession>P84352</accession>
<keyword id="KW-0027">Amidation</keyword>
<keyword id="KW-0903">Direct protein sequencing</keyword>
<keyword id="KW-0527">Neuropeptide</keyword>
<keyword id="KW-0964">Secreted</keyword>
<feature type="peptide" id="PRO_0000044253" description="Periviscerokinin-1">
    <location>
        <begin position="1"/>
        <end position="13"/>
    </location>
</feature>
<feature type="modified residue" description="Valine amide" evidence="1">
    <location>
        <position position="13"/>
    </location>
</feature>
<feature type="unsure residue" description="L or I" evidence="1">
    <location>
        <position position="7"/>
    </location>
</feature>
<protein>
    <recommendedName>
        <fullName>Periviscerokinin-1</fullName>
    </recommendedName>
    <alternativeName>
        <fullName>Neobu-PVK-1</fullName>
    </alternativeName>
</protein>
<comment type="function">
    <text evidence="3">Mediates visceral muscle contractile activity (myotropic activity).</text>
</comment>
<comment type="subcellular location">
    <subcellularLocation>
        <location evidence="3">Secreted</location>
    </subcellularLocation>
</comment>
<comment type="tissue specificity">
    <text evidence="1">Dorsal ganglionic sheath of fused ventral nerve cord.</text>
</comment>
<comment type="mass spectrometry"/>
<comment type="similarity">
    <text evidence="2">Belongs to the periviscerokinin family.</text>
</comment>
<reference evidence="3" key="1">
    <citation type="journal article" date="2003" name="Peptides">
        <title>Mass spectrometric analysis of putative capa-gene products in Musca domestica and Neobellieria bullata.</title>
        <authorList>
            <person name="Predel R."/>
            <person name="Russell W.K."/>
            <person name="Tichy S.E."/>
            <person name="Russell D.H."/>
            <person name="Nachman R.J."/>
        </authorList>
    </citation>
    <scope>PROTEIN SEQUENCE</scope>
    <scope>TISSUE SPECIFICITY</scope>
    <scope>MASS SPECTROMETRY</scope>
    <scope>AMIDATION AT VAL-13</scope>
    <source>
        <tissue evidence="1">Ganglion</tissue>
    </source>
</reference>
<name>PVK1_SARBU</name>
<dbReference type="GO" id="GO:0005576">
    <property type="term" value="C:extracellular region"/>
    <property type="evidence" value="ECO:0007669"/>
    <property type="project" value="UniProtKB-SubCell"/>
</dbReference>
<dbReference type="GO" id="GO:0007218">
    <property type="term" value="P:neuropeptide signaling pathway"/>
    <property type="evidence" value="ECO:0007669"/>
    <property type="project" value="UniProtKB-KW"/>
</dbReference>
<dbReference type="InterPro" id="IPR013231">
    <property type="entry name" value="Periviscerokinin"/>
</dbReference>
<dbReference type="Pfam" id="PF08259">
    <property type="entry name" value="Periviscerokin"/>
    <property type="match status" value="1"/>
</dbReference>
<proteinExistence type="evidence at protein level"/>
<organism>
    <name type="scientific">Sarcophaga bullata</name>
    <name type="common">Grey flesh fly</name>
    <name type="synonym">Neobellieria bullata</name>
    <dbReference type="NCBI Taxonomy" id="7385"/>
    <lineage>
        <taxon>Eukaryota</taxon>
        <taxon>Metazoa</taxon>
        <taxon>Ecdysozoa</taxon>
        <taxon>Arthropoda</taxon>
        <taxon>Hexapoda</taxon>
        <taxon>Insecta</taxon>
        <taxon>Pterygota</taxon>
        <taxon>Neoptera</taxon>
        <taxon>Endopterygota</taxon>
        <taxon>Diptera</taxon>
        <taxon>Brachycera</taxon>
        <taxon>Muscomorpha</taxon>
        <taxon>Oestroidea</taxon>
        <taxon>Sarcophagidae</taxon>
        <taxon>Sarcophaga</taxon>
        <taxon>Neobellieria</taxon>
    </lineage>
</organism>